<dbReference type="EMBL" id="CP000569">
    <property type="protein sequence ID" value="ABN73921.1"/>
    <property type="molecule type" value="Genomic_DNA"/>
</dbReference>
<dbReference type="RefSeq" id="WP_005597292.1">
    <property type="nucleotide sequence ID" value="NC_009053.1"/>
</dbReference>
<dbReference type="SMR" id="A3N0I5"/>
<dbReference type="STRING" id="416269.APL_0825"/>
<dbReference type="EnsemblBacteria" id="ABN73921">
    <property type="protein sequence ID" value="ABN73921"/>
    <property type="gene ID" value="APL_0825"/>
</dbReference>
<dbReference type="GeneID" id="48599012"/>
<dbReference type="KEGG" id="apl:APL_0825"/>
<dbReference type="eggNOG" id="COG2915">
    <property type="taxonomic scope" value="Bacteria"/>
</dbReference>
<dbReference type="HOGENOM" id="CLU_098920_0_0_6"/>
<dbReference type="Proteomes" id="UP000001432">
    <property type="component" value="Chromosome"/>
</dbReference>
<dbReference type="GO" id="GO:0005737">
    <property type="term" value="C:cytoplasm"/>
    <property type="evidence" value="ECO:0007669"/>
    <property type="project" value="UniProtKB-SubCell"/>
</dbReference>
<dbReference type="GO" id="GO:0005886">
    <property type="term" value="C:plasma membrane"/>
    <property type="evidence" value="ECO:0007669"/>
    <property type="project" value="UniProtKB-SubCell"/>
</dbReference>
<dbReference type="Gene3D" id="1.10.3890.10">
    <property type="entry name" value="HflD-like"/>
    <property type="match status" value="1"/>
</dbReference>
<dbReference type="HAMAP" id="MF_00695">
    <property type="entry name" value="HflD_protein"/>
    <property type="match status" value="1"/>
</dbReference>
<dbReference type="InterPro" id="IPR007451">
    <property type="entry name" value="HflD"/>
</dbReference>
<dbReference type="InterPro" id="IPR035932">
    <property type="entry name" value="HflD-like_sf"/>
</dbReference>
<dbReference type="NCBIfam" id="NF001246">
    <property type="entry name" value="PRK00218.1-2"/>
    <property type="match status" value="1"/>
</dbReference>
<dbReference type="NCBIfam" id="NF001248">
    <property type="entry name" value="PRK00218.1-4"/>
    <property type="match status" value="1"/>
</dbReference>
<dbReference type="PANTHER" id="PTHR38100">
    <property type="entry name" value="HIGH FREQUENCY LYSOGENIZATION PROTEIN HFLD"/>
    <property type="match status" value="1"/>
</dbReference>
<dbReference type="PANTHER" id="PTHR38100:SF1">
    <property type="entry name" value="HIGH FREQUENCY LYSOGENIZATION PROTEIN HFLD"/>
    <property type="match status" value="1"/>
</dbReference>
<dbReference type="Pfam" id="PF04356">
    <property type="entry name" value="DUF489"/>
    <property type="match status" value="1"/>
</dbReference>
<dbReference type="SUPFAM" id="SSF101322">
    <property type="entry name" value="YcfC-like"/>
    <property type="match status" value="1"/>
</dbReference>
<proteinExistence type="inferred from homology"/>
<keyword id="KW-0997">Cell inner membrane</keyword>
<keyword id="KW-1003">Cell membrane</keyword>
<keyword id="KW-0175">Coiled coil</keyword>
<keyword id="KW-0963">Cytoplasm</keyword>
<keyword id="KW-0472">Membrane</keyword>
<keyword id="KW-1185">Reference proteome</keyword>
<organism>
    <name type="scientific">Actinobacillus pleuropneumoniae serotype 5b (strain L20)</name>
    <dbReference type="NCBI Taxonomy" id="416269"/>
    <lineage>
        <taxon>Bacteria</taxon>
        <taxon>Pseudomonadati</taxon>
        <taxon>Pseudomonadota</taxon>
        <taxon>Gammaproteobacteria</taxon>
        <taxon>Pasteurellales</taxon>
        <taxon>Pasteurellaceae</taxon>
        <taxon>Actinobacillus</taxon>
    </lineage>
</organism>
<sequence length="210" mass="23409">MATNYHDITIAFAGVCQAVSLVQQFAHKGSADREIFANSIKSLLVTQPDSTLAVFDGQLANLKLGLETVQAQMGSPNGKLDTEIGRYWINVLALSQKLNKNPEAKAKLAERLQQIERQLPLYENDIMADQMIANLAAIYSDVISPLGSKIHVLGLQDYLVRPDIQQKIRASLLAGIRAGILWQQVGGTRWQFLFSRRKILNQAQQFYKSI</sequence>
<feature type="chain" id="PRO_1000045415" description="High frequency lysogenization protein HflD homolog">
    <location>
        <begin position="1"/>
        <end position="210"/>
    </location>
</feature>
<feature type="coiled-coil region" evidence="1">
    <location>
        <begin position="103"/>
        <end position="130"/>
    </location>
</feature>
<protein>
    <recommendedName>
        <fullName evidence="1">High frequency lysogenization protein HflD homolog</fullName>
    </recommendedName>
</protein>
<name>HFLD_ACTP2</name>
<reference key="1">
    <citation type="journal article" date="2008" name="J. Bacteriol.">
        <title>The complete genome sequence of Actinobacillus pleuropneumoniae L20 (serotype 5b).</title>
        <authorList>
            <person name="Foote S.J."/>
            <person name="Bosse J.T."/>
            <person name="Bouevitch A.B."/>
            <person name="Langford P.R."/>
            <person name="Young N.M."/>
            <person name="Nash J.H.E."/>
        </authorList>
    </citation>
    <scope>NUCLEOTIDE SEQUENCE [LARGE SCALE GENOMIC DNA]</scope>
    <source>
        <strain>L20</strain>
    </source>
</reference>
<gene>
    <name evidence="1" type="primary">hflD</name>
    <name type="ordered locus">APL_0825</name>
</gene>
<evidence type="ECO:0000255" key="1">
    <source>
        <dbReference type="HAMAP-Rule" id="MF_00695"/>
    </source>
</evidence>
<comment type="subcellular location">
    <subcellularLocation>
        <location>Cytoplasm</location>
    </subcellularLocation>
    <subcellularLocation>
        <location evidence="1">Cell inner membrane</location>
        <topology evidence="1">Peripheral membrane protein</topology>
        <orientation evidence="1">Cytoplasmic side</orientation>
    </subcellularLocation>
</comment>
<comment type="similarity">
    <text evidence="1">Belongs to the HflD family.</text>
</comment>
<accession>A3N0I5</accession>